<accession>C0RFI1</accession>
<reference key="1">
    <citation type="submission" date="2009-03" db="EMBL/GenBank/DDBJ databases">
        <title>Brucella melitensis ATCC 23457 whole genome shotgun sequencing project.</title>
        <authorList>
            <person name="Setubal J.C."/>
            <person name="Boyle S."/>
            <person name="Crasta O.R."/>
            <person name="Gillespie J.J."/>
            <person name="Kenyon R.W."/>
            <person name="Lu J."/>
            <person name="Mane S."/>
            <person name="Nagrani S."/>
            <person name="Shallom J.M."/>
            <person name="Shallom S."/>
            <person name="Shukla M."/>
            <person name="Snyder E.E."/>
            <person name="Sobral B.W."/>
            <person name="Wattam A.R."/>
            <person name="Will R."/>
            <person name="Williams K."/>
            <person name="Yoo H."/>
            <person name="Munk C."/>
            <person name="Tapia R."/>
            <person name="Han C."/>
            <person name="Detter J.C."/>
            <person name="Bruce D."/>
            <person name="Brettin T.S."/>
        </authorList>
    </citation>
    <scope>NUCLEOTIDE SEQUENCE [LARGE SCALE GENOMIC DNA]</scope>
    <source>
        <strain>ATCC 23457</strain>
    </source>
</reference>
<dbReference type="EC" id="3.1.2.6" evidence="1"/>
<dbReference type="EMBL" id="CP001488">
    <property type="protein sequence ID" value="ACO01653.1"/>
    <property type="molecule type" value="Genomic_DNA"/>
</dbReference>
<dbReference type="RefSeq" id="WP_002965004.1">
    <property type="nucleotide sequence ID" value="NC_012441.1"/>
</dbReference>
<dbReference type="SMR" id="C0RFI1"/>
<dbReference type="GeneID" id="97534780"/>
<dbReference type="KEGG" id="bmi:BMEA_A1993"/>
<dbReference type="HOGENOM" id="CLU_030571_4_1_5"/>
<dbReference type="UniPathway" id="UPA00619">
    <property type="reaction ID" value="UER00676"/>
</dbReference>
<dbReference type="Proteomes" id="UP000001748">
    <property type="component" value="Chromosome I"/>
</dbReference>
<dbReference type="GO" id="GO:0004416">
    <property type="term" value="F:hydroxyacylglutathione hydrolase activity"/>
    <property type="evidence" value="ECO:0007669"/>
    <property type="project" value="UniProtKB-UniRule"/>
</dbReference>
<dbReference type="GO" id="GO:0046872">
    <property type="term" value="F:metal ion binding"/>
    <property type="evidence" value="ECO:0007669"/>
    <property type="project" value="UniProtKB-KW"/>
</dbReference>
<dbReference type="GO" id="GO:0019243">
    <property type="term" value="P:methylglyoxal catabolic process to D-lactate via S-lactoyl-glutathione"/>
    <property type="evidence" value="ECO:0007669"/>
    <property type="project" value="InterPro"/>
</dbReference>
<dbReference type="CDD" id="cd07723">
    <property type="entry name" value="hydroxyacylglutathione_hydrolase_MBL-fold"/>
    <property type="match status" value="1"/>
</dbReference>
<dbReference type="Gene3D" id="3.60.15.10">
    <property type="entry name" value="Ribonuclease Z/Hydroxyacylglutathione hydrolase-like"/>
    <property type="match status" value="1"/>
</dbReference>
<dbReference type="HAMAP" id="MF_01374">
    <property type="entry name" value="Glyoxalase_2"/>
    <property type="match status" value="1"/>
</dbReference>
<dbReference type="InterPro" id="IPR035680">
    <property type="entry name" value="Clx_II_MBL"/>
</dbReference>
<dbReference type="InterPro" id="IPR050110">
    <property type="entry name" value="Glyoxalase_II_hydrolase"/>
</dbReference>
<dbReference type="InterPro" id="IPR032282">
    <property type="entry name" value="HAGH_C"/>
</dbReference>
<dbReference type="InterPro" id="IPR017782">
    <property type="entry name" value="Hydroxyacylglutathione_Hdrlase"/>
</dbReference>
<dbReference type="InterPro" id="IPR001279">
    <property type="entry name" value="Metallo-B-lactamas"/>
</dbReference>
<dbReference type="InterPro" id="IPR036866">
    <property type="entry name" value="RibonucZ/Hydroxyglut_hydro"/>
</dbReference>
<dbReference type="NCBIfam" id="TIGR03413">
    <property type="entry name" value="GSH_gloB"/>
    <property type="match status" value="1"/>
</dbReference>
<dbReference type="PANTHER" id="PTHR43705">
    <property type="entry name" value="HYDROXYACYLGLUTATHIONE HYDROLASE"/>
    <property type="match status" value="1"/>
</dbReference>
<dbReference type="PANTHER" id="PTHR43705:SF1">
    <property type="entry name" value="HYDROXYACYLGLUTATHIONE HYDROLASE GLOB"/>
    <property type="match status" value="1"/>
</dbReference>
<dbReference type="Pfam" id="PF16123">
    <property type="entry name" value="HAGH_C"/>
    <property type="match status" value="1"/>
</dbReference>
<dbReference type="Pfam" id="PF00753">
    <property type="entry name" value="Lactamase_B"/>
    <property type="match status" value="1"/>
</dbReference>
<dbReference type="PIRSF" id="PIRSF005457">
    <property type="entry name" value="Glx"/>
    <property type="match status" value="1"/>
</dbReference>
<dbReference type="SMART" id="SM00849">
    <property type="entry name" value="Lactamase_B"/>
    <property type="match status" value="1"/>
</dbReference>
<dbReference type="SUPFAM" id="SSF56281">
    <property type="entry name" value="Metallo-hydrolase/oxidoreductase"/>
    <property type="match status" value="1"/>
</dbReference>
<organism>
    <name type="scientific">Brucella melitensis biotype 2 (strain ATCC 23457)</name>
    <dbReference type="NCBI Taxonomy" id="546272"/>
    <lineage>
        <taxon>Bacteria</taxon>
        <taxon>Pseudomonadati</taxon>
        <taxon>Pseudomonadota</taxon>
        <taxon>Alphaproteobacteria</taxon>
        <taxon>Hyphomicrobiales</taxon>
        <taxon>Brucellaceae</taxon>
        <taxon>Brucella/Ochrobactrum group</taxon>
        <taxon>Brucella</taxon>
    </lineage>
</organism>
<name>GLO2_BRUMB</name>
<feature type="chain" id="PRO_1000184174" description="Hydroxyacylglutathione hydrolase">
    <location>
        <begin position="1"/>
        <end position="260"/>
    </location>
</feature>
<feature type="binding site" evidence="1">
    <location>
        <position position="61"/>
    </location>
    <ligand>
        <name>Zn(2+)</name>
        <dbReference type="ChEBI" id="CHEBI:29105"/>
        <label>1</label>
    </ligand>
</feature>
<feature type="binding site" evidence="1">
    <location>
        <position position="63"/>
    </location>
    <ligand>
        <name>Zn(2+)</name>
        <dbReference type="ChEBI" id="CHEBI:29105"/>
        <label>1</label>
    </ligand>
</feature>
<feature type="binding site" evidence="1">
    <location>
        <position position="65"/>
    </location>
    <ligand>
        <name>Zn(2+)</name>
        <dbReference type="ChEBI" id="CHEBI:29105"/>
        <label>2</label>
    </ligand>
</feature>
<feature type="binding site" evidence="1">
    <location>
        <position position="66"/>
    </location>
    <ligand>
        <name>Zn(2+)</name>
        <dbReference type="ChEBI" id="CHEBI:29105"/>
        <label>2</label>
    </ligand>
</feature>
<feature type="binding site" evidence="1">
    <location>
        <position position="119"/>
    </location>
    <ligand>
        <name>Zn(2+)</name>
        <dbReference type="ChEBI" id="CHEBI:29105"/>
        <label>1</label>
    </ligand>
</feature>
<feature type="binding site" evidence="1">
    <location>
        <position position="138"/>
    </location>
    <ligand>
        <name>Zn(2+)</name>
        <dbReference type="ChEBI" id="CHEBI:29105"/>
        <label>1</label>
    </ligand>
</feature>
<feature type="binding site" evidence="1">
    <location>
        <position position="138"/>
    </location>
    <ligand>
        <name>Zn(2+)</name>
        <dbReference type="ChEBI" id="CHEBI:29105"/>
        <label>2</label>
    </ligand>
</feature>
<feature type="binding site" evidence="1">
    <location>
        <position position="176"/>
    </location>
    <ligand>
        <name>Zn(2+)</name>
        <dbReference type="ChEBI" id="CHEBI:29105"/>
        <label>2</label>
    </ligand>
</feature>
<comment type="function">
    <text evidence="1">Thiolesterase that catalyzes the hydrolysis of S-D-lactoyl-glutathione to form glutathione and D-lactic acid.</text>
</comment>
<comment type="catalytic activity">
    <reaction evidence="1">
        <text>an S-(2-hydroxyacyl)glutathione + H2O = a 2-hydroxy carboxylate + glutathione + H(+)</text>
        <dbReference type="Rhea" id="RHEA:21864"/>
        <dbReference type="ChEBI" id="CHEBI:15377"/>
        <dbReference type="ChEBI" id="CHEBI:15378"/>
        <dbReference type="ChEBI" id="CHEBI:57925"/>
        <dbReference type="ChEBI" id="CHEBI:58896"/>
        <dbReference type="ChEBI" id="CHEBI:71261"/>
        <dbReference type="EC" id="3.1.2.6"/>
    </reaction>
</comment>
<comment type="cofactor">
    <cofactor evidence="1">
        <name>Zn(2+)</name>
        <dbReference type="ChEBI" id="CHEBI:29105"/>
    </cofactor>
    <text evidence="1">Binds 2 Zn(2+) ions per subunit.</text>
</comment>
<comment type="pathway">
    <text evidence="1">Secondary metabolite metabolism; methylglyoxal degradation; (R)-lactate from methylglyoxal: step 2/2.</text>
</comment>
<comment type="subunit">
    <text evidence="1">Monomer.</text>
</comment>
<comment type="similarity">
    <text evidence="1">Belongs to the metallo-beta-lactamase superfamily. Glyoxalase II family.</text>
</comment>
<proteinExistence type="inferred from homology"/>
<protein>
    <recommendedName>
        <fullName evidence="1">Hydroxyacylglutathione hydrolase</fullName>
        <ecNumber evidence="1">3.1.2.6</ecNumber>
    </recommendedName>
    <alternativeName>
        <fullName evidence="1">Glyoxalase II</fullName>
        <shortName evidence="1">Glx II</shortName>
    </alternativeName>
</protein>
<keyword id="KW-0378">Hydrolase</keyword>
<keyword id="KW-0479">Metal-binding</keyword>
<keyword id="KW-0862">Zinc</keyword>
<evidence type="ECO:0000255" key="1">
    <source>
        <dbReference type="HAMAP-Rule" id="MF_01374"/>
    </source>
</evidence>
<gene>
    <name evidence="1" type="primary">gloB</name>
    <name type="ordered locus">BMEA_A1993</name>
</gene>
<sequence>MHRMEQRLEIEQFICRSDNYGVLIHDPESALTATIDAPDAYAIEAALERRGWTLDFIFTTHHHLDHVEGNEPLKEKFGVSIIGPEAEKAKIPGIDRTVKGGDEFTFGLFKVKVISTPGHTAGGISYYLPDAKVVFTGDTLFALGCGRLFEGTPATMFHSLEKLVALPGDTALYCGHEYTQNNARFALTIDPDNSALKERAKEIARLRAHERMTLPSTIALEMATNPFLRWHDRTIRARLGLQDAPDEAVFAEIRKRKDMF</sequence>